<protein>
    <recommendedName>
        <fullName evidence="1">Cysteine--tRNA ligase</fullName>
        <ecNumber evidence="1">6.1.1.16</ecNumber>
    </recommendedName>
    <alternativeName>
        <fullName evidence="1">Cysteinyl-tRNA synthetase</fullName>
        <shortName evidence="1">CysRS</shortName>
    </alternativeName>
</protein>
<keyword id="KW-0030">Aminoacyl-tRNA synthetase</keyword>
<keyword id="KW-0067">ATP-binding</keyword>
<keyword id="KW-0963">Cytoplasm</keyword>
<keyword id="KW-0436">Ligase</keyword>
<keyword id="KW-0479">Metal-binding</keyword>
<keyword id="KW-0547">Nucleotide-binding</keyword>
<keyword id="KW-0648">Protein biosynthesis</keyword>
<keyword id="KW-1185">Reference proteome</keyword>
<keyword id="KW-0862">Zinc</keyword>
<sequence>MLHIYNTLSRTKETFKPVHAGEVRIYVCGMTVYDYCHLGHARMLVAFDVVQRWLRASGYAVNYVRNITDIDDKIIRRAVQTGRRMHEVTDYFIAAMHADERALAVERPDHEPRATAYVGEMIDIIGRLEKNGLAYQADDGDVNYAVRGFQGYGKLSGKSLDDLRAGERVAVGSSKRDPLDFVLWKSAKEEEPPETKWDSPYGFGRPGWHIECSAMSKSLLGLPLDIHGGGPDLKFPHHENEIAQTEGAFGGTLANIWMHCGPLMVDAEKMSKSLGNFRTIRQTIAQGEAQDGEADYQANPREAEMLRFFIVRNHYRSPQNYTPDNLVDAQNALDRLYQALANVTPDVAGIDWNEAQAQAFKAAMNDDFNSSGAVAALFELAGQVNRERDSRAAGQLKALGAVLGLLQQDPAVYFQSSTRYSSAGMQQGASQMDAARIEALIAERGQAKLSRDFARADAIRAELRAAGIELDDKPGGMTQWRRA</sequence>
<feature type="chain" id="PRO_0000240892" description="Cysteine--tRNA ligase">
    <location>
        <begin position="1"/>
        <end position="483"/>
    </location>
</feature>
<feature type="short sequence motif" description="'HIGH' region">
    <location>
        <begin position="30"/>
        <end position="40"/>
    </location>
</feature>
<feature type="short sequence motif" description="'KMSKS' region">
    <location>
        <begin position="269"/>
        <end position="273"/>
    </location>
</feature>
<feature type="binding site" evidence="1">
    <location>
        <position position="28"/>
    </location>
    <ligand>
        <name>Zn(2+)</name>
        <dbReference type="ChEBI" id="CHEBI:29105"/>
    </ligand>
</feature>
<feature type="binding site" evidence="1">
    <location>
        <position position="212"/>
    </location>
    <ligand>
        <name>Zn(2+)</name>
        <dbReference type="ChEBI" id="CHEBI:29105"/>
    </ligand>
</feature>
<feature type="binding site" evidence="1">
    <location>
        <position position="237"/>
    </location>
    <ligand>
        <name>Zn(2+)</name>
        <dbReference type="ChEBI" id="CHEBI:29105"/>
    </ligand>
</feature>
<feature type="binding site" evidence="1">
    <location>
        <position position="241"/>
    </location>
    <ligand>
        <name>Zn(2+)</name>
        <dbReference type="ChEBI" id="CHEBI:29105"/>
    </ligand>
</feature>
<feature type="binding site" evidence="1">
    <location>
        <position position="272"/>
    </location>
    <ligand>
        <name>ATP</name>
        <dbReference type="ChEBI" id="CHEBI:30616"/>
    </ligand>
</feature>
<organism>
    <name type="scientific">Bordetella avium (strain 197N)</name>
    <dbReference type="NCBI Taxonomy" id="360910"/>
    <lineage>
        <taxon>Bacteria</taxon>
        <taxon>Pseudomonadati</taxon>
        <taxon>Pseudomonadota</taxon>
        <taxon>Betaproteobacteria</taxon>
        <taxon>Burkholderiales</taxon>
        <taxon>Alcaligenaceae</taxon>
        <taxon>Bordetella</taxon>
    </lineage>
</organism>
<name>SYC_BORA1</name>
<accession>Q2KX38</accession>
<evidence type="ECO:0000255" key="1">
    <source>
        <dbReference type="HAMAP-Rule" id="MF_00041"/>
    </source>
</evidence>
<proteinExistence type="inferred from homology"/>
<dbReference type="EC" id="6.1.1.16" evidence="1"/>
<dbReference type="EMBL" id="AM167904">
    <property type="protein sequence ID" value="CAJ50172.1"/>
    <property type="molecule type" value="Genomic_DNA"/>
</dbReference>
<dbReference type="RefSeq" id="WP_012418215.1">
    <property type="nucleotide sequence ID" value="NC_010645.1"/>
</dbReference>
<dbReference type="SMR" id="Q2KX38"/>
<dbReference type="STRING" id="360910.BAV2562"/>
<dbReference type="KEGG" id="bav:BAV2562"/>
<dbReference type="eggNOG" id="COG0215">
    <property type="taxonomic scope" value="Bacteria"/>
</dbReference>
<dbReference type="HOGENOM" id="CLU_013528_0_1_4"/>
<dbReference type="OrthoDB" id="9815130at2"/>
<dbReference type="Proteomes" id="UP000001977">
    <property type="component" value="Chromosome"/>
</dbReference>
<dbReference type="GO" id="GO:0005829">
    <property type="term" value="C:cytosol"/>
    <property type="evidence" value="ECO:0007669"/>
    <property type="project" value="TreeGrafter"/>
</dbReference>
<dbReference type="GO" id="GO:0005524">
    <property type="term" value="F:ATP binding"/>
    <property type="evidence" value="ECO:0007669"/>
    <property type="project" value="UniProtKB-UniRule"/>
</dbReference>
<dbReference type="GO" id="GO:0004817">
    <property type="term" value="F:cysteine-tRNA ligase activity"/>
    <property type="evidence" value="ECO:0007669"/>
    <property type="project" value="UniProtKB-UniRule"/>
</dbReference>
<dbReference type="GO" id="GO:0008270">
    <property type="term" value="F:zinc ion binding"/>
    <property type="evidence" value="ECO:0007669"/>
    <property type="project" value="UniProtKB-UniRule"/>
</dbReference>
<dbReference type="GO" id="GO:0006423">
    <property type="term" value="P:cysteinyl-tRNA aminoacylation"/>
    <property type="evidence" value="ECO:0007669"/>
    <property type="project" value="UniProtKB-UniRule"/>
</dbReference>
<dbReference type="CDD" id="cd07963">
    <property type="entry name" value="Anticodon_Ia_Cys"/>
    <property type="match status" value="1"/>
</dbReference>
<dbReference type="CDD" id="cd00672">
    <property type="entry name" value="CysRS_core"/>
    <property type="match status" value="1"/>
</dbReference>
<dbReference type="FunFam" id="3.40.50.620:FF:000009">
    <property type="entry name" value="Cysteine--tRNA ligase"/>
    <property type="match status" value="1"/>
</dbReference>
<dbReference type="Gene3D" id="1.20.120.1910">
    <property type="entry name" value="Cysteine-tRNA ligase, C-terminal anti-codon recognition domain"/>
    <property type="match status" value="1"/>
</dbReference>
<dbReference type="Gene3D" id="3.40.50.620">
    <property type="entry name" value="HUPs"/>
    <property type="match status" value="1"/>
</dbReference>
<dbReference type="HAMAP" id="MF_00041">
    <property type="entry name" value="Cys_tRNA_synth"/>
    <property type="match status" value="1"/>
</dbReference>
<dbReference type="InterPro" id="IPR015803">
    <property type="entry name" value="Cys-tRNA-ligase"/>
</dbReference>
<dbReference type="InterPro" id="IPR015273">
    <property type="entry name" value="Cys-tRNA-synt_Ia_DALR"/>
</dbReference>
<dbReference type="InterPro" id="IPR024909">
    <property type="entry name" value="Cys-tRNA/MSH_ligase"/>
</dbReference>
<dbReference type="InterPro" id="IPR014729">
    <property type="entry name" value="Rossmann-like_a/b/a_fold"/>
</dbReference>
<dbReference type="InterPro" id="IPR032678">
    <property type="entry name" value="tRNA-synt_1_cat_dom"/>
</dbReference>
<dbReference type="InterPro" id="IPR009080">
    <property type="entry name" value="tRNAsynth_Ia_anticodon-bd"/>
</dbReference>
<dbReference type="NCBIfam" id="TIGR00435">
    <property type="entry name" value="cysS"/>
    <property type="match status" value="1"/>
</dbReference>
<dbReference type="PANTHER" id="PTHR10890:SF3">
    <property type="entry name" value="CYSTEINE--TRNA LIGASE, CYTOPLASMIC"/>
    <property type="match status" value="1"/>
</dbReference>
<dbReference type="PANTHER" id="PTHR10890">
    <property type="entry name" value="CYSTEINYL-TRNA SYNTHETASE"/>
    <property type="match status" value="1"/>
</dbReference>
<dbReference type="Pfam" id="PF09190">
    <property type="entry name" value="DALR_2"/>
    <property type="match status" value="1"/>
</dbReference>
<dbReference type="Pfam" id="PF01406">
    <property type="entry name" value="tRNA-synt_1e"/>
    <property type="match status" value="1"/>
</dbReference>
<dbReference type="PRINTS" id="PR00983">
    <property type="entry name" value="TRNASYNTHCYS"/>
</dbReference>
<dbReference type="SMART" id="SM00840">
    <property type="entry name" value="DALR_2"/>
    <property type="match status" value="1"/>
</dbReference>
<dbReference type="SUPFAM" id="SSF47323">
    <property type="entry name" value="Anticodon-binding domain of a subclass of class I aminoacyl-tRNA synthetases"/>
    <property type="match status" value="1"/>
</dbReference>
<dbReference type="SUPFAM" id="SSF52374">
    <property type="entry name" value="Nucleotidylyl transferase"/>
    <property type="match status" value="1"/>
</dbReference>
<reference key="1">
    <citation type="journal article" date="2006" name="J. Bacteriol.">
        <title>Comparison of the genome sequence of the poultry pathogen Bordetella avium with those of B. bronchiseptica, B. pertussis, and B. parapertussis reveals extensive diversity in surface structures associated with host interaction.</title>
        <authorList>
            <person name="Sebaihia M."/>
            <person name="Preston A."/>
            <person name="Maskell D.J."/>
            <person name="Kuzmiak H."/>
            <person name="Connell T.D."/>
            <person name="King N.D."/>
            <person name="Orndorff P.E."/>
            <person name="Miyamoto D.M."/>
            <person name="Thomson N.R."/>
            <person name="Harris D."/>
            <person name="Goble A."/>
            <person name="Lord A."/>
            <person name="Murphy L."/>
            <person name="Quail M.A."/>
            <person name="Rutter S."/>
            <person name="Squares R."/>
            <person name="Squares S."/>
            <person name="Woodward J."/>
            <person name="Parkhill J."/>
            <person name="Temple L.M."/>
        </authorList>
    </citation>
    <scope>NUCLEOTIDE SEQUENCE [LARGE SCALE GENOMIC DNA]</scope>
    <source>
        <strain>197N</strain>
    </source>
</reference>
<gene>
    <name evidence="1" type="primary">cysS</name>
    <name type="ordered locus">BAV2562</name>
</gene>
<comment type="catalytic activity">
    <reaction evidence="1">
        <text>tRNA(Cys) + L-cysteine + ATP = L-cysteinyl-tRNA(Cys) + AMP + diphosphate</text>
        <dbReference type="Rhea" id="RHEA:17773"/>
        <dbReference type="Rhea" id="RHEA-COMP:9661"/>
        <dbReference type="Rhea" id="RHEA-COMP:9679"/>
        <dbReference type="ChEBI" id="CHEBI:30616"/>
        <dbReference type="ChEBI" id="CHEBI:33019"/>
        <dbReference type="ChEBI" id="CHEBI:35235"/>
        <dbReference type="ChEBI" id="CHEBI:78442"/>
        <dbReference type="ChEBI" id="CHEBI:78517"/>
        <dbReference type="ChEBI" id="CHEBI:456215"/>
        <dbReference type="EC" id="6.1.1.16"/>
    </reaction>
</comment>
<comment type="cofactor">
    <cofactor evidence="1">
        <name>Zn(2+)</name>
        <dbReference type="ChEBI" id="CHEBI:29105"/>
    </cofactor>
    <text evidence="1">Binds 1 zinc ion per subunit.</text>
</comment>
<comment type="subunit">
    <text evidence="1">Monomer.</text>
</comment>
<comment type="subcellular location">
    <subcellularLocation>
        <location evidence="1">Cytoplasm</location>
    </subcellularLocation>
</comment>
<comment type="similarity">
    <text evidence="1">Belongs to the class-I aminoacyl-tRNA synthetase family.</text>
</comment>